<sequence length="444" mass="48341">MVVIKDIVAREILDSRGNPTIEVDVSTEGGVFRAAVPSGASTGIYEALELRDKDPKRYLGKGVLNAVEIVRQEIKPALLGKDPCDQKGIDMLMVEQLDGTKNEWGYSKSKLGANAILGVSIACCRAGAASKGLPLYKYIATLAGKTIDKMVMPVPFFNVINGGEHAGNGLALQEFLIAPVGAPNIREAIRYGSETYHHLKNVIKNKYGLDATNVGDEGGFAPNVATAEEALNLLVEAIKAAGYEGKIKIAFDAAASEFYKQDEKKYDLDYKCKTKNASKHLTGEKLKEVYEGWLKKYPIISVEDPFDQDDFASFSAFTKDVGEKTQVIGDDILVTNILRIEKALKDKACNCLLLKVNQIGSVTEAIEACLLAQKSGWGVQVSHRSGETEDSFIADLVVGLRCGQIKSGSPCRSERLCKYNQLMRIEESLGADCVYAGESFRHPK</sequence>
<protein>
    <recommendedName>
        <fullName>Enolase 1</fullName>
        <ecNumber>4.2.1.11</ecNumber>
    </recommendedName>
    <alternativeName>
        <fullName>2-phospho-D-glycerate hydro-lyase 1</fullName>
    </alternativeName>
    <alternativeName>
        <fullName>2-phosphoglycerate dehydratase 1</fullName>
    </alternativeName>
</protein>
<feature type="chain" id="PRO_0000134093" description="Enolase 1">
    <location>
        <begin position="1"/>
        <end position="444"/>
    </location>
</feature>
<feature type="active site" description="Proton donor" evidence="1">
    <location>
        <position position="217"/>
    </location>
</feature>
<feature type="active site" description="Proton acceptor" evidence="1">
    <location>
        <position position="355"/>
    </location>
</feature>
<feature type="binding site" evidence="1">
    <location>
        <position position="165"/>
    </location>
    <ligand>
        <name>substrate</name>
    </ligand>
</feature>
<feature type="binding site" evidence="1">
    <location>
        <position position="174"/>
    </location>
    <ligand>
        <name>substrate</name>
    </ligand>
</feature>
<feature type="binding site" evidence="1">
    <location>
        <position position="303"/>
    </location>
    <ligand>
        <name>substrate</name>
    </ligand>
</feature>
<feature type="binding site" evidence="1">
    <location>
        <position position="330"/>
    </location>
    <ligand>
        <name>substrate</name>
    </ligand>
</feature>
<feature type="binding site" evidence="1">
    <location>
        <begin position="382"/>
        <end position="385"/>
    </location>
    <ligand>
        <name>substrate</name>
    </ligand>
</feature>
<feature type="binding site" evidence="1">
    <location>
        <position position="406"/>
    </location>
    <ligand>
        <name>substrate</name>
    </ligand>
</feature>
<reference key="1">
    <citation type="journal article" date="1999" name="J. Biol. Chem.">
        <title>The protozoan parasite Toxoplasma gondii expresses two functional plant-like glycolytic enzymes. Implications for evolutionary origin of apicomplexans.</title>
        <authorList>
            <person name="Dzierszinski F."/>
            <person name="Popescu O."/>
            <person name="Toursel C."/>
            <person name="Slomianny C."/>
            <person name="Yahiaoui B."/>
            <person name="Tomavo S."/>
        </authorList>
    </citation>
    <scope>NUCLEOTIDE SEQUENCE [MRNA]</scope>
    <scope>DEVELOPMENTAL STAGE</scope>
</reference>
<reference key="2">
    <citation type="submission" date="2002-09" db="EMBL/GenBank/DDBJ databases">
        <title>Toxoplasma gondii enolases ENO1 and ENO2 loci.</title>
        <authorList>
            <person name="Kibe M."/>
            <person name="Tomavo S."/>
        </authorList>
    </citation>
    <scope>NUCLEOTIDE SEQUENCE [GENOMIC DNA]</scope>
    <source>
        <strain>PLK</strain>
    </source>
</reference>
<reference key="3">
    <citation type="journal article" date="2001" name="J. Mol. Biol.">
        <title>Differential expression of two plant-like enolases with distinct enzymatic and antigenic properties during stage conversion of the protozoan parasite Toxoplasma gondii.</title>
        <authorList>
            <person name="Dzierszinski F."/>
            <person name="Mortuaire M."/>
            <person name="Dendouga N."/>
            <person name="Popescu O."/>
            <person name="Tomavo S."/>
        </authorList>
    </citation>
    <scope>CHARACTERIZATION</scope>
</reference>
<gene>
    <name type="primary">ENO1</name>
</gene>
<name>ENO1_TOXGO</name>
<comment type="catalytic activity">
    <reaction>
        <text>(2R)-2-phosphoglycerate = phosphoenolpyruvate + H2O</text>
        <dbReference type="Rhea" id="RHEA:10164"/>
        <dbReference type="ChEBI" id="CHEBI:15377"/>
        <dbReference type="ChEBI" id="CHEBI:58289"/>
        <dbReference type="ChEBI" id="CHEBI:58702"/>
        <dbReference type="EC" id="4.2.1.11"/>
    </reaction>
</comment>
<comment type="cofactor">
    <cofactor evidence="1">
        <name>Mg(2+)</name>
        <dbReference type="ChEBI" id="CHEBI:18420"/>
    </cofactor>
    <text evidence="1">Mg(2+) is required for catalysis and for stabilizing the dimer.</text>
</comment>
<comment type="pathway">
    <text>Carbohydrate degradation; glycolysis; pyruvate from D-glyceraldehyde 3-phosphate: step 4/5.</text>
</comment>
<comment type="subunit">
    <text evidence="1">Homodimer.</text>
</comment>
<comment type="subcellular location">
    <subcellularLocation>
        <location evidence="1">Cytoplasm</location>
    </subcellularLocation>
</comment>
<comment type="developmental stage">
    <text evidence="2">Expressed preferentially in the bradyzoite stage.</text>
</comment>
<comment type="miscellaneous">
    <text>While ENO1 and ENO2 display similar K(m) values, the pure tachyzoite-specific enzyme (ENO2) has a threefold specific activity at V(max) compared with that of the bradyzoite-specific enolase (ENO1).</text>
</comment>
<comment type="similarity">
    <text evidence="3">Belongs to the enolase family.</text>
</comment>
<proteinExistence type="evidence at protein level"/>
<accession>Q9UAE6</accession>
<organism>
    <name type="scientific">Toxoplasma gondii</name>
    <dbReference type="NCBI Taxonomy" id="5811"/>
    <lineage>
        <taxon>Eukaryota</taxon>
        <taxon>Sar</taxon>
        <taxon>Alveolata</taxon>
        <taxon>Apicomplexa</taxon>
        <taxon>Conoidasida</taxon>
        <taxon>Coccidia</taxon>
        <taxon>Eucoccidiorida</taxon>
        <taxon>Eimeriorina</taxon>
        <taxon>Sarcocystidae</taxon>
        <taxon>Toxoplasma</taxon>
    </lineage>
</organism>
<dbReference type="EC" id="4.2.1.11"/>
<dbReference type="EMBL" id="AF051910">
    <property type="protein sequence ID" value="AAD51128.1"/>
    <property type="molecule type" value="mRNA"/>
</dbReference>
<dbReference type="EMBL" id="AY155668">
    <property type="protein sequence ID" value="AAP24058.1"/>
    <property type="molecule type" value="Genomic_DNA"/>
</dbReference>
<dbReference type="SMR" id="Q9UAE6"/>
<dbReference type="EnsemblProtists" id="TGME49_268860-t26_1">
    <property type="protein sequence ID" value="TGME49_268860-t26_1"/>
    <property type="gene ID" value="TGME49_268860"/>
</dbReference>
<dbReference type="VEuPathDB" id="ToxoDB:TGARI_268860"/>
<dbReference type="VEuPathDB" id="ToxoDB:TGCAST_268860"/>
<dbReference type="VEuPathDB" id="ToxoDB:TGCOUG_268860"/>
<dbReference type="VEuPathDB" id="ToxoDB:TGDOM2_268860"/>
<dbReference type="VEuPathDB" id="ToxoDB:TGFOU_268860"/>
<dbReference type="VEuPathDB" id="ToxoDB:TGGT1_268860"/>
<dbReference type="VEuPathDB" id="ToxoDB:TGMAS_268860"/>
<dbReference type="VEuPathDB" id="ToxoDB:TGME49_268860"/>
<dbReference type="VEuPathDB" id="ToxoDB:TGP89_268860"/>
<dbReference type="VEuPathDB" id="ToxoDB:TGPRC2_268860"/>
<dbReference type="VEuPathDB" id="ToxoDB:TGRH88_082390"/>
<dbReference type="VEuPathDB" id="ToxoDB:TGRUB_268860"/>
<dbReference type="VEuPathDB" id="ToxoDB:TGVAND_268860"/>
<dbReference type="VEuPathDB" id="ToxoDB:TGVEG_268860"/>
<dbReference type="OMA" id="QDDWTAW"/>
<dbReference type="BRENDA" id="4.2.1.11">
    <property type="organism ID" value="6411"/>
</dbReference>
<dbReference type="SABIO-RK" id="Q9UAE6"/>
<dbReference type="UniPathway" id="UPA00109">
    <property type="reaction ID" value="UER00187"/>
</dbReference>
<dbReference type="GO" id="GO:0000015">
    <property type="term" value="C:phosphopyruvate hydratase complex"/>
    <property type="evidence" value="ECO:0007669"/>
    <property type="project" value="InterPro"/>
</dbReference>
<dbReference type="GO" id="GO:0000287">
    <property type="term" value="F:magnesium ion binding"/>
    <property type="evidence" value="ECO:0007669"/>
    <property type="project" value="InterPro"/>
</dbReference>
<dbReference type="GO" id="GO:0004634">
    <property type="term" value="F:phosphopyruvate hydratase activity"/>
    <property type="evidence" value="ECO:0007669"/>
    <property type="project" value="UniProtKB-EC"/>
</dbReference>
<dbReference type="GO" id="GO:0006096">
    <property type="term" value="P:glycolytic process"/>
    <property type="evidence" value="ECO:0007669"/>
    <property type="project" value="UniProtKB-UniPathway"/>
</dbReference>
<dbReference type="CDD" id="cd03313">
    <property type="entry name" value="enolase"/>
    <property type="match status" value="1"/>
</dbReference>
<dbReference type="FunFam" id="3.30.390.10:FF:000001">
    <property type="entry name" value="Enolase"/>
    <property type="match status" value="1"/>
</dbReference>
<dbReference type="FunFam" id="3.20.20.120:FF:000002">
    <property type="entry name" value="Enolase 1"/>
    <property type="match status" value="1"/>
</dbReference>
<dbReference type="Gene3D" id="3.20.20.120">
    <property type="entry name" value="Enolase-like C-terminal domain"/>
    <property type="match status" value="1"/>
</dbReference>
<dbReference type="Gene3D" id="3.30.390.10">
    <property type="entry name" value="Enolase-like, N-terminal domain"/>
    <property type="match status" value="1"/>
</dbReference>
<dbReference type="HAMAP" id="MF_00318">
    <property type="entry name" value="Enolase"/>
    <property type="match status" value="1"/>
</dbReference>
<dbReference type="InterPro" id="IPR000941">
    <property type="entry name" value="Enolase"/>
</dbReference>
<dbReference type="InterPro" id="IPR036849">
    <property type="entry name" value="Enolase-like_C_sf"/>
</dbReference>
<dbReference type="InterPro" id="IPR029017">
    <property type="entry name" value="Enolase-like_N"/>
</dbReference>
<dbReference type="InterPro" id="IPR020810">
    <property type="entry name" value="Enolase_C"/>
</dbReference>
<dbReference type="InterPro" id="IPR020809">
    <property type="entry name" value="Enolase_CS"/>
</dbReference>
<dbReference type="InterPro" id="IPR020811">
    <property type="entry name" value="Enolase_N"/>
</dbReference>
<dbReference type="NCBIfam" id="TIGR01060">
    <property type="entry name" value="eno"/>
    <property type="match status" value="1"/>
</dbReference>
<dbReference type="PANTHER" id="PTHR11902">
    <property type="entry name" value="ENOLASE"/>
    <property type="match status" value="1"/>
</dbReference>
<dbReference type="PANTHER" id="PTHR11902:SF1">
    <property type="entry name" value="ENOLASE"/>
    <property type="match status" value="1"/>
</dbReference>
<dbReference type="Pfam" id="PF00113">
    <property type="entry name" value="Enolase_C"/>
    <property type="match status" value="1"/>
</dbReference>
<dbReference type="Pfam" id="PF03952">
    <property type="entry name" value="Enolase_N"/>
    <property type="match status" value="1"/>
</dbReference>
<dbReference type="PIRSF" id="PIRSF001400">
    <property type="entry name" value="Enolase"/>
    <property type="match status" value="1"/>
</dbReference>
<dbReference type="PRINTS" id="PR00148">
    <property type="entry name" value="ENOLASE"/>
</dbReference>
<dbReference type="SFLD" id="SFLDS00001">
    <property type="entry name" value="Enolase"/>
    <property type="match status" value="1"/>
</dbReference>
<dbReference type="SFLD" id="SFLDF00002">
    <property type="entry name" value="enolase"/>
    <property type="match status" value="1"/>
</dbReference>
<dbReference type="SMART" id="SM01192">
    <property type="entry name" value="Enolase_C"/>
    <property type="match status" value="1"/>
</dbReference>
<dbReference type="SMART" id="SM01193">
    <property type="entry name" value="Enolase_N"/>
    <property type="match status" value="1"/>
</dbReference>
<dbReference type="SUPFAM" id="SSF51604">
    <property type="entry name" value="Enolase C-terminal domain-like"/>
    <property type="match status" value="1"/>
</dbReference>
<dbReference type="SUPFAM" id="SSF54826">
    <property type="entry name" value="Enolase N-terminal domain-like"/>
    <property type="match status" value="1"/>
</dbReference>
<dbReference type="PROSITE" id="PS00164">
    <property type="entry name" value="ENOLASE"/>
    <property type="match status" value="1"/>
</dbReference>
<evidence type="ECO:0000250" key="1"/>
<evidence type="ECO:0000269" key="2">
    <source>
    </source>
</evidence>
<evidence type="ECO:0000305" key="3"/>
<keyword id="KW-0963">Cytoplasm</keyword>
<keyword id="KW-0324">Glycolysis</keyword>
<keyword id="KW-0456">Lyase</keyword>
<keyword id="KW-0460">Magnesium</keyword>